<proteinExistence type="evidence at protein level"/>
<protein>
    <recommendedName>
        <fullName evidence="3">Distal tail protein</fullName>
        <shortName>Dit</shortName>
    </recommendedName>
    <alternativeName>
        <fullName>Gene product 19.1</fullName>
        <shortName>Gp19.1</shortName>
    </alternativeName>
</protein>
<accession>O48459</accession>
<feature type="chain" id="PRO_0000438139" description="Distal tail protein">
    <location>
        <begin position="1"/>
        <end position="253"/>
    </location>
</feature>
<feature type="strand" evidence="5">
    <location>
        <begin position="13"/>
        <end position="15"/>
    </location>
</feature>
<feature type="helix" evidence="5">
    <location>
        <begin position="20"/>
        <end position="22"/>
    </location>
</feature>
<feature type="strand" evidence="5">
    <location>
        <begin position="24"/>
        <end position="31"/>
    </location>
</feature>
<feature type="strand" evidence="5">
    <location>
        <begin position="38"/>
        <end position="42"/>
    </location>
</feature>
<feature type="strand" evidence="5">
    <location>
        <begin position="51"/>
        <end position="56"/>
    </location>
</feature>
<feature type="strand" evidence="5">
    <location>
        <begin position="60"/>
        <end position="68"/>
    </location>
</feature>
<feature type="helix" evidence="5">
    <location>
        <begin position="74"/>
        <end position="88"/>
    </location>
</feature>
<feature type="strand" evidence="5">
    <location>
        <begin position="94"/>
        <end position="98"/>
    </location>
</feature>
<feature type="strand" evidence="5">
    <location>
        <begin position="105"/>
        <end position="115"/>
    </location>
</feature>
<feature type="strand" evidence="5">
    <location>
        <begin position="123"/>
        <end position="145"/>
    </location>
</feature>
<feature type="strand" evidence="5">
    <location>
        <begin position="150"/>
        <end position="154"/>
    </location>
</feature>
<feature type="strand" evidence="5">
    <location>
        <begin position="156"/>
        <end position="158"/>
    </location>
</feature>
<feature type="strand" evidence="5">
    <location>
        <begin position="163"/>
        <end position="167"/>
    </location>
</feature>
<feature type="strand" evidence="5">
    <location>
        <begin position="175"/>
        <end position="181"/>
    </location>
</feature>
<feature type="strand" evidence="5">
    <location>
        <begin position="184"/>
        <end position="191"/>
    </location>
</feature>
<feature type="strand" evidence="5">
    <location>
        <begin position="196"/>
        <end position="202"/>
    </location>
</feature>
<feature type="strand" evidence="5">
    <location>
        <begin position="204"/>
        <end position="206"/>
    </location>
</feature>
<feature type="strand" evidence="5">
    <location>
        <begin position="234"/>
        <end position="242"/>
    </location>
</feature>
<feature type="strand" evidence="5">
    <location>
        <begin position="244"/>
        <end position="252"/>
    </location>
</feature>
<evidence type="ECO:0000269" key="1">
    <source>
    </source>
</evidence>
<evidence type="ECO:0000305" key="2">
    <source>
    </source>
</evidence>
<evidence type="ECO:0000312" key="3">
    <source>
        <dbReference type="EMBL" id="CAA66560.1"/>
    </source>
</evidence>
<evidence type="ECO:0007744" key="4">
    <source>
        <dbReference type="PDB" id="2X8K"/>
    </source>
</evidence>
<evidence type="ECO:0007829" key="5">
    <source>
        <dbReference type="PDB" id="2X8K"/>
    </source>
</evidence>
<reference key="1">
    <citation type="journal article" date="1997" name="Gene">
        <title>The complete nucleotide sequence and functional organization of Bacillus subtilis bacteriophage SPP1.</title>
        <authorList>
            <person name="Alonso J.C."/>
            <person name="Luder G."/>
            <person name="Stiege A.C."/>
            <person name="Chai S."/>
            <person name="Weise F."/>
            <person name="Trautner T.A."/>
        </authorList>
    </citation>
    <scope>NUCLEOTIDE SEQUENCE [LARGE SCALE GENOMIC DNA]</scope>
</reference>
<reference evidence="4" key="2">
    <citation type="journal article" date="2010" name="J. Biol. Chem.">
        <title>Crystal structure of bacteriophage SPP1 distal tail protein (gp19.1): a baseplate hub paradigm in gram-positive infecting phages.</title>
        <authorList>
            <person name="Veesler D."/>
            <person name="Robin G."/>
            <person name="Lichiere J."/>
            <person name="Auzat I."/>
            <person name="Tavares P."/>
            <person name="Bron P."/>
            <person name="Campanacci V."/>
            <person name="Cambillau C."/>
        </authorList>
    </citation>
    <scope>X-RAY CRYSTALLOGRAPHY (2.95 ANGSTROMS) OF 2-253</scope>
    <scope>SUBUNIT</scope>
    <scope>FUNCTION</scope>
    <scope>SUBCELLULAR LOCATION</scope>
</reference>
<organism>
    <name type="scientific">Bacillus phage SPP1</name>
    <name type="common">Bacteriophage SPP1</name>
    <dbReference type="NCBI Taxonomy" id="10724"/>
    <lineage>
        <taxon>Viruses</taxon>
        <taxon>Duplodnaviria</taxon>
        <taxon>Heunggongvirae</taxon>
        <taxon>Uroviricota</taxon>
        <taxon>Caudoviricetes</taxon>
    </lineage>
</organism>
<name>DIT_BPSPP</name>
<keyword id="KW-0002">3D-structure</keyword>
<keyword id="KW-1185">Reference proteome</keyword>
<keyword id="KW-1171">Viral genome ejection through host cell envelope</keyword>
<keyword id="KW-1243">Viral long flexible tail ejection system</keyword>
<keyword id="KW-1162">Viral penetration into host cytoplasm</keyword>
<keyword id="KW-1227">Viral tail protein</keyword>
<keyword id="KW-0946">Virion</keyword>
<keyword id="KW-1160">Virus entry into host cell</keyword>
<organismHost>
    <name type="scientific">Bacillus subtilis</name>
    <dbReference type="NCBI Taxonomy" id="1423"/>
</organismHost>
<sequence length="253" mass="28563">MNIYDILDKVFTMMYDGQDLTDYFLVQEVRGRSVYSIEMGKRTIAGVDGGVITTESLPARELEVDAIVFGDGTETDLRRRIEYLNFLLHRDTDVPITFSDEPSRTYYGRYEFATEGDEKGGFHKVTLNFYCQDPLKYGPEVTTDVTTASTPVKNTGLAVTNPTIRCVFSTSATEYEMQLLDGSTVVKFLKVKYGFNTGDTLVIDCHERSVTLNGQDIMPALLIQSDWIQLKPQVNTYLKATQPSTIVFTEKFL</sequence>
<comment type="function">
    <text evidence="1">Forms a 40 Angstroms wide channel at the distal tip of the tail. Remains associated to the tail after DNA ejection.</text>
</comment>
<comment type="subunit">
    <text evidence="2">Homohexamer.</text>
</comment>
<comment type="subcellular location">
    <subcellularLocation>
        <location evidence="1">Virion</location>
    </subcellularLocation>
</comment>
<dbReference type="EMBL" id="X97918">
    <property type="protein sequence ID" value="CAA66560.1"/>
    <property type="molecule type" value="Genomic_DNA"/>
</dbReference>
<dbReference type="PIR" id="T42299">
    <property type="entry name" value="T42299"/>
</dbReference>
<dbReference type="RefSeq" id="NP_690690.1">
    <property type="nucleotide sequence ID" value="NC_004166.2"/>
</dbReference>
<dbReference type="PDB" id="2X8K">
    <property type="method" value="X-ray"/>
    <property type="resolution" value="2.95 A"/>
    <property type="chains" value="A/B/C=2-253"/>
</dbReference>
<dbReference type="PDBsum" id="2X8K"/>
<dbReference type="SMR" id="O48459"/>
<dbReference type="GeneID" id="955334"/>
<dbReference type="KEGG" id="vg:955334"/>
<dbReference type="OrthoDB" id="424at10239"/>
<dbReference type="EvolutionaryTrace" id="O48459"/>
<dbReference type="Proteomes" id="UP000002559">
    <property type="component" value="Genome"/>
</dbReference>
<dbReference type="GO" id="GO:0098015">
    <property type="term" value="C:virus tail"/>
    <property type="evidence" value="ECO:0000314"/>
    <property type="project" value="UniProtKB"/>
</dbReference>
<dbReference type="GO" id="GO:0099001">
    <property type="term" value="P:symbiont genome ejection through host cell envelope, long flexible tail mechanism"/>
    <property type="evidence" value="ECO:0007669"/>
    <property type="project" value="UniProtKB-KW"/>
</dbReference>
<dbReference type="Gene3D" id="2.40.30.200">
    <property type="match status" value="1"/>
</dbReference>
<dbReference type="Gene3D" id="2.60.120.860">
    <property type="match status" value="1"/>
</dbReference>
<dbReference type="InterPro" id="IPR006520">
    <property type="entry name" value="Dit_BPSPP_N"/>
</dbReference>
<dbReference type="InterPro" id="IPR054738">
    <property type="entry name" value="Siphovirus-type_tail_C"/>
</dbReference>
<dbReference type="InterPro" id="IPR008841">
    <property type="entry name" value="Siphovirus-type_tail_N"/>
</dbReference>
<dbReference type="NCBIfam" id="TIGR01633">
    <property type="entry name" value="phi3626_gp14_N"/>
    <property type="match status" value="1"/>
</dbReference>
<dbReference type="Pfam" id="PF05709">
    <property type="entry name" value="Sipho_tail"/>
    <property type="match status" value="1"/>
</dbReference>
<dbReference type="Pfam" id="PF22768">
    <property type="entry name" value="SPP1_Dit"/>
    <property type="match status" value="1"/>
</dbReference>